<evidence type="ECO:0000255" key="1">
    <source>
        <dbReference type="HAMAP-Rule" id="MF_00682"/>
    </source>
</evidence>
<comment type="function">
    <text evidence="1">Co-chaperone involved in the maturation of iron-sulfur cluster-containing proteins. Seems to help targeting proteins to be folded toward HscA.</text>
</comment>
<comment type="subunit">
    <text evidence="1">Interacts with HscA and stimulates its ATPase activity. Interacts with IscU.</text>
</comment>
<comment type="similarity">
    <text evidence="1">Belongs to the HscB family.</text>
</comment>
<protein>
    <recommendedName>
        <fullName evidence="1">Co-chaperone protein HscB</fullName>
    </recommendedName>
    <alternativeName>
        <fullName evidence="1">Hsc20</fullName>
    </alternativeName>
</protein>
<accession>Q667Y4</accession>
<name>HSCB_YERPS</name>
<keyword id="KW-0143">Chaperone</keyword>
<gene>
    <name evidence="1" type="primary">hscB</name>
    <name type="ordered locus">YPTB2856</name>
</gene>
<reference key="1">
    <citation type="journal article" date="2004" name="Proc. Natl. Acad. Sci. U.S.A.">
        <title>Insights into the evolution of Yersinia pestis through whole-genome comparison with Yersinia pseudotuberculosis.</title>
        <authorList>
            <person name="Chain P.S.G."/>
            <person name="Carniel E."/>
            <person name="Larimer F.W."/>
            <person name="Lamerdin J."/>
            <person name="Stoutland P.O."/>
            <person name="Regala W.M."/>
            <person name="Georgescu A.M."/>
            <person name="Vergez L.M."/>
            <person name="Land M.L."/>
            <person name="Motin V.L."/>
            <person name="Brubaker R.R."/>
            <person name="Fowler J."/>
            <person name="Hinnebusch J."/>
            <person name="Marceau M."/>
            <person name="Medigue C."/>
            <person name="Simonet M."/>
            <person name="Chenal-Francisque V."/>
            <person name="Souza B."/>
            <person name="Dacheux D."/>
            <person name="Elliott J.M."/>
            <person name="Derbise A."/>
            <person name="Hauser L.J."/>
            <person name="Garcia E."/>
        </authorList>
    </citation>
    <scope>NUCLEOTIDE SEQUENCE [LARGE SCALE GENOMIC DNA]</scope>
    <source>
        <strain>IP32953</strain>
    </source>
</reference>
<feature type="chain" id="PRO_0000070999" description="Co-chaperone protein HscB">
    <location>
        <begin position="1"/>
        <end position="174"/>
    </location>
</feature>
<feature type="domain" description="J" evidence="1">
    <location>
        <begin position="2"/>
        <end position="74"/>
    </location>
</feature>
<dbReference type="EMBL" id="BX936398">
    <property type="protein sequence ID" value="CAH22094.1"/>
    <property type="molecule type" value="Genomic_DNA"/>
</dbReference>
<dbReference type="RefSeq" id="WP_011192812.1">
    <property type="nucleotide sequence ID" value="NC_006155.1"/>
</dbReference>
<dbReference type="SMR" id="Q667Y4"/>
<dbReference type="KEGG" id="ypo:BZ17_3775"/>
<dbReference type="KEGG" id="yps:YPTB2856"/>
<dbReference type="PATRIC" id="fig|273123.14.peg.3961"/>
<dbReference type="Proteomes" id="UP000001011">
    <property type="component" value="Chromosome"/>
</dbReference>
<dbReference type="GO" id="GO:1990230">
    <property type="term" value="C:iron-sulfur cluster transfer complex"/>
    <property type="evidence" value="ECO:0007669"/>
    <property type="project" value="TreeGrafter"/>
</dbReference>
<dbReference type="GO" id="GO:0001671">
    <property type="term" value="F:ATPase activator activity"/>
    <property type="evidence" value="ECO:0007669"/>
    <property type="project" value="InterPro"/>
</dbReference>
<dbReference type="GO" id="GO:0051087">
    <property type="term" value="F:protein-folding chaperone binding"/>
    <property type="evidence" value="ECO:0007669"/>
    <property type="project" value="InterPro"/>
</dbReference>
<dbReference type="GO" id="GO:0044571">
    <property type="term" value="P:[2Fe-2S] cluster assembly"/>
    <property type="evidence" value="ECO:0007669"/>
    <property type="project" value="InterPro"/>
</dbReference>
<dbReference type="GO" id="GO:0051259">
    <property type="term" value="P:protein complex oligomerization"/>
    <property type="evidence" value="ECO:0007669"/>
    <property type="project" value="InterPro"/>
</dbReference>
<dbReference type="GO" id="GO:0006457">
    <property type="term" value="P:protein folding"/>
    <property type="evidence" value="ECO:0007669"/>
    <property type="project" value="UniProtKB-UniRule"/>
</dbReference>
<dbReference type="CDD" id="cd06257">
    <property type="entry name" value="DnaJ"/>
    <property type="match status" value="1"/>
</dbReference>
<dbReference type="FunFam" id="1.10.287.110:FF:000008">
    <property type="entry name" value="Co-chaperone protein HscB"/>
    <property type="match status" value="1"/>
</dbReference>
<dbReference type="Gene3D" id="1.10.287.110">
    <property type="entry name" value="DnaJ domain"/>
    <property type="match status" value="1"/>
</dbReference>
<dbReference type="Gene3D" id="1.20.1280.20">
    <property type="entry name" value="HscB, C-terminal domain"/>
    <property type="match status" value="1"/>
</dbReference>
<dbReference type="HAMAP" id="MF_00682">
    <property type="entry name" value="HscB"/>
    <property type="match status" value="1"/>
</dbReference>
<dbReference type="InterPro" id="IPR001623">
    <property type="entry name" value="DnaJ_domain"/>
</dbReference>
<dbReference type="InterPro" id="IPR004640">
    <property type="entry name" value="HscB"/>
</dbReference>
<dbReference type="InterPro" id="IPR036386">
    <property type="entry name" value="HscB_C_sf"/>
</dbReference>
<dbReference type="InterPro" id="IPR009073">
    <property type="entry name" value="HscB_oligo_C"/>
</dbReference>
<dbReference type="InterPro" id="IPR036869">
    <property type="entry name" value="J_dom_sf"/>
</dbReference>
<dbReference type="NCBIfam" id="TIGR00714">
    <property type="entry name" value="hscB"/>
    <property type="match status" value="1"/>
</dbReference>
<dbReference type="NCBIfam" id="NF003449">
    <property type="entry name" value="PRK05014.1"/>
    <property type="match status" value="1"/>
</dbReference>
<dbReference type="PANTHER" id="PTHR14021">
    <property type="entry name" value="IRON-SULFUR CLUSTER CO-CHAPERONE PROTEIN HSCB"/>
    <property type="match status" value="1"/>
</dbReference>
<dbReference type="PANTHER" id="PTHR14021:SF15">
    <property type="entry name" value="IRON-SULFUR CLUSTER CO-CHAPERONE PROTEIN HSCB"/>
    <property type="match status" value="1"/>
</dbReference>
<dbReference type="Pfam" id="PF00226">
    <property type="entry name" value="DnaJ"/>
    <property type="match status" value="1"/>
</dbReference>
<dbReference type="Pfam" id="PF07743">
    <property type="entry name" value="HSCB_C"/>
    <property type="match status" value="1"/>
</dbReference>
<dbReference type="SMART" id="SM00271">
    <property type="entry name" value="DnaJ"/>
    <property type="match status" value="1"/>
</dbReference>
<dbReference type="SUPFAM" id="SSF46565">
    <property type="entry name" value="Chaperone J-domain"/>
    <property type="match status" value="1"/>
</dbReference>
<dbReference type="SUPFAM" id="SSF47144">
    <property type="entry name" value="HSC20 (HSCB), C-terminal oligomerisation domain"/>
    <property type="match status" value="1"/>
</dbReference>
<dbReference type="PROSITE" id="PS50076">
    <property type="entry name" value="DNAJ_2"/>
    <property type="match status" value="1"/>
</dbReference>
<sequence length="174" mass="20649">MDYFTLFGLPARYLIDGNQLTTRYQELQRQFHPDRFATQPERERLASMQQAATINDAYQTLKHPLKRAEYMLSLQGFDLGNEQHTMRDTAFLMEQLELREELDAIERKPDAETLLAEFSRRLAQMTTTRTQQMVEQLDAQLWVQAADTVRKLRFLDKLQQQVEQLEERLFDDFA</sequence>
<proteinExistence type="inferred from homology"/>
<organism>
    <name type="scientific">Yersinia pseudotuberculosis serotype I (strain IP32953)</name>
    <dbReference type="NCBI Taxonomy" id="273123"/>
    <lineage>
        <taxon>Bacteria</taxon>
        <taxon>Pseudomonadati</taxon>
        <taxon>Pseudomonadota</taxon>
        <taxon>Gammaproteobacteria</taxon>
        <taxon>Enterobacterales</taxon>
        <taxon>Yersiniaceae</taxon>
        <taxon>Yersinia</taxon>
    </lineage>
</organism>